<keyword id="KW-0963">Cytoplasm</keyword>
<keyword id="KW-0520">NAD</keyword>
<keyword id="KW-0521">NADP</keyword>
<keyword id="KW-0560">Oxidoreductase</keyword>
<gene>
    <name evidence="1" type="primary">ghrA</name>
    <name type="ordered locus">SPA1716</name>
</gene>
<comment type="function">
    <text evidence="1">Catalyzes the NADPH-dependent reduction of glyoxylate and hydroxypyruvate into glycolate and glycerate, respectively.</text>
</comment>
<comment type="catalytic activity">
    <reaction evidence="1">
        <text>glycolate + NADP(+) = glyoxylate + NADPH + H(+)</text>
        <dbReference type="Rhea" id="RHEA:10992"/>
        <dbReference type="ChEBI" id="CHEBI:15378"/>
        <dbReference type="ChEBI" id="CHEBI:29805"/>
        <dbReference type="ChEBI" id="CHEBI:36655"/>
        <dbReference type="ChEBI" id="CHEBI:57783"/>
        <dbReference type="ChEBI" id="CHEBI:58349"/>
        <dbReference type="EC" id="1.1.1.79"/>
    </reaction>
</comment>
<comment type="catalytic activity">
    <reaction evidence="1">
        <text>(R)-glycerate + NAD(+) = 3-hydroxypyruvate + NADH + H(+)</text>
        <dbReference type="Rhea" id="RHEA:17905"/>
        <dbReference type="ChEBI" id="CHEBI:15378"/>
        <dbReference type="ChEBI" id="CHEBI:16659"/>
        <dbReference type="ChEBI" id="CHEBI:17180"/>
        <dbReference type="ChEBI" id="CHEBI:57540"/>
        <dbReference type="ChEBI" id="CHEBI:57945"/>
        <dbReference type="EC" id="1.1.1.81"/>
    </reaction>
</comment>
<comment type="catalytic activity">
    <reaction evidence="1">
        <text>(R)-glycerate + NADP(+) = 3-hydroxypyruvate + NADPH + H(+)</text>
        <dbReference type="Rhea" id="RHEA:18657"/>
        <dbReference type="ChEBI" id="CHEBI:15378"/>
        <dbReference type="ChEBI" id="CHEBI:16659"/>
        <dbReference type="ChEBI" id="CHEBI:17180"/>
        <dbReference type="ChEBI" id="CHEBI:57783"/>
        <dbReference type="ChEBI" id="CHEBI:58349"/>
        <dbReference type="EC" id="1.1.1.81"/>
    </reaction>
</comment>
<comment type="subcellular location">
    <subcellularLocation>
        <location evidence="1">Cytoplasm</location>
    </subcellularLocation>
</comment>
<comment type="similarity">
    <text evidence="1">Belongs to the D-isomer specific 2-hydroxyacid dehydrogenase family. GhrA subfamily.</text>
</comment>
<accession>Q5PGZ3</accession>
<dbReference type="EC" id="1.1.1.79" evidence="1"/>
<dbReference type="EC" id="1.1.1.81" evidence="1"/>
<dbReference type="EMBL" id="CP000026">
    <property type="protein sequence ID" value="AAV77639.1"/>
    <property type="molecule type" value="Genomic_DNA"/>
</dbReference>
<dbReference type="RefSeq" id="WP_000402552.1">
    <property type="nucleotide sequence ID" value="NC_006511.1"/>
</dbReference>
<dbReference type="SMR" id="Q5PGZ3"/>
<dbReference type="KEGG" id="spt:SPA1716"/>
<dbReference type="HOGENOM" id="CLU_019796_1_0_6"/>
<dbReference type="Proteomes" id="UP000008185">
    <property type="component" value="Chromosome"/>
</dbReference>
<dbReference type="GO" id="GO:0005737">
    <property type="term" value="C:cytoplasm"/>
    <property type="evidence" value="ECO:0007669"/>
    <property type="project" value="UniProtKB-SubCell"/>
</dbReference>
<dbReference type="GO" id="GO:0030267">
    <property type="term" value="F:glyoxylate reductase (NADPH) activity"/>
    <property type="evidence" value="ECO:0007669"/>
    <property type="project" value="UniProtKB-UniRule"/>
</dbReference>
<dbReference type="GO" id="GO:0008465">
    <property type="term" value="F:hydroxypyruvate reductase (NADH) activity"/>
    <property type="evidence" value="ECO:0007669"/>
    <property type="project" value="RHEA"/>
</dbReference>
<dbReference type="GO" id="GO:0120509">
    <property type="term" value="F:hydroxypyruvate reductase (NADPH) activity"/>
    <property type="evidence" value="ECO:0007669"/>
    <property type="project" value="RHEA"/>
</dbReference>
<dbReference type="GO" id="GO:0051287">
    <property type="term" value="F:NAD binding"/>
    <property type="evidence" value="ECO:0007669"/>
    <property type="project" value="InterPro"/>
</dbReference>
<dbReference type="CDD" id="cd12164">
    <property type="entry name" value="GDH_like_2"/>
    <property type="match status" value="1"/>
</dbReference>
<dbReference type="FunFam" id="3.40.50.720:FF:000110">
    <property type="entry name" value="Glyoxylate/hydroxypyruvate reductase A"/>
    <property type="match status" value="1"/>
</dbReference>
<dbReference type="Gene3D" id="3.40.50.720">
    <property type="entry name" value="NAD(P)-binding Rossmann-like Domain"/>
    <property type="match status" value="2"/>
</dbReference>
<dbReference type="HAMAP" id="MF_01666">
    <property type="entry name" value="2_Hacid_dh_C_GhrA"/>
    <property type="match status" value="1"/>
</dbReference>
<dbReference type="InterPro" id="IPR006140">
    <property type="entry name" value="D-isomer_DH_NAD-bd"/>
</dbReference>
<dbReference type="InterPro" id="IPR023514">
    <property type="entry name" value="GhrA_Enterobacterales"/>
</dbReference>
<dbReference type="InterPro" id="IPR036291">
    <property type="entry name" value="NAD(P)-bd_dom_sf"/>
</dbReference>
<dbReference type="NCBIfam" id="NF012013">
    <property type="entry name" value="PRK15469.1"/>
    <property type="match status" value="1"/>
</dbReference>
<dbReference type="PANTHER" id="PTHR43333">
    <property type="entry name" value="2-HACID_DH_C DOMAIN-CONTAINING PROTEIN"/>
    <property type="match status" value="1"/>
</dbReference>
<dbReference type="PANTHER" id="PTHR43333:SF1">
    <property type="entry name" value="D-ISOMER SPECIFIC 2-HYDROXYACID DEHYDROGENASE NAD-BINDING DOMAIN-CONTAINING PROTEIN"/>
    <property type="match status" value="1"/>
</dbReference>
<dbReference type="Pfam" id="PF02826">
    <property type="entry name" value="2-Hacid_dh_C"/>
    <property type="match status" value="1"/>
</dbReference>
<dbReference type="SUPFAM" id="SSF51735">
    <property type="entry name" value="NAD(P)-binding Rossmann-fold domains"/>
    <property type="match status" value="1"/>
</dbReference>
<reference key="1">
    <citation type="journal article" date="2004" name="Nat. Genet.">
        <title>Comparison of genome degradation in Paratyphi A and Typhi, human-restricted serovars of Salmonella enterica that cause typhoid.</title>
        <authorList>
            <person name="McClelland M."/>
            <person name="Sanderson K.E."/>
            <person name="Clifton S.W."/>
            <person name="Latreille P."/>
            <person name="Porwollik S."/>
            <person name="Sabo A."/>
            <person name="Meyer R."/>
            <person name="Bieri T."/>
            <person name="Ozersky P."/>
            <person name="McLellan M."/>
            <person name="Harkins C.R."/>
            <person name="Wang C."/>
            <person name="Nguyen C."/>
            <person name="Berghoff A."/>
            <person name="Elliott G."/>
            <person name="Kohlberg S."/>
            <person name="Strong C."/>
            <person name="Du F."/>
            <person name="Carter J."/>
            <person name="Kremizki C."/>
            <person name="Layman D."/>
            <person name="Leonard S."/>
            <person name="Sun H."/>
            <person name="Fulton L."/>
            <person name="Nash W."/>
            <person name="Miner T."/>
            <person name="Minx P."/>
            <person name="Delehaunty K."/>
            <person name="Fronick C."/>
            <person name="Magrini V."/>
            <person name="Nhan M."/>
            <person name="Warren W."/>
            <person name="Florea L."/>
            <person name="Spieth J."/>
            <person name="Wilson R.K."/>
        </authorList>
    </citation>
    <scope>NUCLEOTIDE SEQUENCE [LARGE SCALE GENOMIC DNA]</scope>
    <source>
        <strain>ATCC 9150 / SARB42</strain>
    </source>
</reference>
<organism>
    <name type="scientific">Salmonella paratyphi A (strain ATCC 9150 / SARB42)</name>
    <dbReference type="NCBI Taxonomy" id="295319"/>
    <lineage>
        <taxon>Bacteria</taxon>
        <taxon>Pseudomonadati</taxon>
        <taxon>Pseudomonadota</taxon>
        <taxon>Gammaproteobacteria</taxon>
        <taxon>Enterobacterales</taxon>
        <taxon>Enterobacteriaceae</taxon>
        <taxon>Salmonella</taxon>
    </lineage>
</organism>
<sequence>MEIIFYHPTFNAAWWVNALEKALPHARVREWKVGDNNPADYALVWQPPVEMLAGRRLKAVFALGAGVDAILSKLNAHPEMLDASIPLFRLEDTGMGLQMQEYAVSQVLHWFRRFDDYQALKNQALWKPLPEYTREEFSVGIMGAGVLGAKVAESLQAWGFPLRCWSRSRKSWPGVESYVGREELRAFLNQTRVLINLLPNTAQTVGIINSELLDQLPDGAYVLNLARGVHVQEADLLAALDSGKLKGAMLDVFSQEPLPQESPLWRHPRVAMTPHIAAVTRPAEAIDYISRTITQLEKGEPVTGQVDRARGY</sequence>
<name>GHRA_SALPA</name>
<protein>
    <recommendedName>
        <fullName evidence="1">Glyoxylate/hydroxypyruvate reductase A</fullName>
        <ecNumber evidence="1">1.1.1.79</ecNumber>
        <ecNumber evidence="1">1.1.1.81</ecNumber>
    </recommendedName>
    <alternativeName>
        <fullName evidence="1">2-ketoacid reductase</fullName>
    </alternativeName>
</protein>
<feature type="chain" id="PRO_0000348369" description="Glyoxylate/hydroxypyruvate reductase A">
    <location>
        <begin position="1"/>
        <end position="312"/>
    </location>
</feature>
<feature type="active site" evidence="1">
    <location>
        <position position="227"/>
    </location>
</feature>
<feature type="active site" description="Proton donor" evidence="1">
    <location>
        <position position="275"/>
    </location>
</feature>
<proteinExistence type="inferred from homology"/>
<evidence type="ECO:0000255" key="1">
    <source>
        <dbReference type="HAMAP-Rule" id="MF_01666"/>
    </source>
</evidence>